<reference key="1">
    <citation type="submission" date="2006-01" db="EMBL/GenBank/DDBJ databases">
        <title>Complete sequence of Anaeromyxobacter dehalogenans 2CP-C.</title>
        <authorList>
            <person name="Copeland A."/>
            <person name="Lucas S."/>
            <person name="Lapidus A."/>
            <person name="Barry K."/>
            <person name="Detter J.C."/>
            <person name="Glavina T."/>
            <person name="Hammon N."/>
            <person name="Israni S."/>
            <person name="Pitluck S."/>
            <person name="Brettin T."/>
            <person name="Bruce D."/>
            <person name="Han C."/>
            <person name="Tapia R."/>
            <person name="Gilna P."/>
            <person name="Kiss H."/>
            <person name="Schmutz J."/>
            <person name="Larimer F."/>
            <person name="Land M."/>
            <person name="Kyrpides N."/>
            <person name="Anderson I."/>
            <person name="Sanford R.A."/>
            <person name="Ritalahti K.M."/>
            <person name="Thomas H.S."/>
            <person name="Kirby J.R."/>
            <person name="Zhulin I.B."/>
            <person name="Loeffler F.E."/>
            <person name="Richardson P."/>
        </authorList>
    </citation>
    <scope>NUCLEOTIDE SEQUENCE [LARGE SCALE GENOMIC DNA]</scope>
    <source>
        <strain>2CP-C</strain>
    </source>
</reference>
<keyword id="KW-1185">Reference proteome</keyword>
<keyword id="KW-0687">Ribonucleoprotein</keyword>
<keyword id="KW-0689">Ribosomal protein</keyword>
<keyword id="KW-0694">RNA-binding</keyword>
<keyword id="KW-0699">rRNA-binding</keyword>
<keyword id="KW-0820">tRNA-binding</keyword>
<evidence type="ECO:0000255" key="1">
    <source>
        <dbReference type="HAMAP-Rule" id="MF_01333"/>
    </source>
</evidence>
<evidence type="ECO:0000305" key="2"/>
<sequence>MAARLKERYDKQLRAELMKELGFANPMQAPRLEKIVVNMGLGEAINNGKIIDASVEQLAAITGQKPVVTRARKSIANFKLRQGQSIGAMVTLRGDRMYEFFDRLVSIALPRVRDFKGVSPKAFDGKGNYTLGVREQIIFPEINYDKVEKIKGLNITVVTTARNDEEGRALLRHLGMPFRQ</sequence>
<dbReference type="EMBL" id="CP000251">
    <property type="protein sequence ID" value="ABC81705.1"/>
    <property type="molecule type" value="Genomic_DNA"/>
</dbReference>
<dbReference type="RefSeq" id="WP_011420988.1">
    <property type="nucleotide sequence ID" value="NC_007760.1"/>
</dbReference>
<dbReference type="SMR" id="Q2IJ79"/>
<dbReference type="STRING" id="290397.Adeh_1934"/>
<dbReference type="KEGG" id="ade:Adeh_1934"/>
<dbReference type="eggNOG" id="COG0094">
    <property type="taxonomic scope" value="Bacteria"/>
</dbReference>
<dbReference type="HOGENOM" id="CLU_061015_2_1_7"/>
<dbReference type="OrthoDB" id="9806626at2"/>
<dbReference type="Proteomes" id="UP000001935">
    <property type="component" value="Chromosome"/>
</dbReference>
<dbReference type="GO" id="GO:1990904">
    <property type="term" value="C:ribonucleoprotein complex"/>
    <property type="evidence" value="ECO:0007669"/>
    <property type="project" value="UniProtKB-KW"/>
</dbReference>
<dbReference type="GO" id="GO:0005840">
    <property type="term" value="C:ribosome"/>
    <property type="evidence" value="ECO:0007669"/>
    <property type="project" value="UniProtKB-KW"/>
</dbReference>
<dbReference type="GO" id="GO:0019843">
    <property type="term" value="F:rRNA binding"/>
    <property type="evidence" value="ECO:0007669"/>
    <property type="project" value="UniProtKB-UniRule"/>
</dbReference>
<dbReference type="GO" id="GO:0003735">
    <property type="term" value="F:structural constituent of ribosome"/>
    <property type="evidence" value="ECO:0007669"/>
    <property type="project" value="InterPro"/>
</dbReference>
<dbReference type="GO" id="GO:0000049">
    <property type="term" value="F:tRNA binding"/>
    <property type="evidence" value="ECO:0007669"/>
    <property type="project" value="UniProtKB-UniRule"/>
</dbReference>
<dbReference type="GO" id="GO:0006412">
    <property type="term" value="P:translation"/>
    <property type="evidence" value="ECO:0007669"/>
    <property type="project" value="UniProtKB-UniRule"/>
</dbReference>
<dbReference type="FunFam" id="3.30.1440.10:FF:000001">
    <property type="entry name" value="50S ribosomal protein L5"/>
    <property type="match status" value="1"/>
</dbReference>
<dbReference type="Gene3D" id="3.30.1440.10">
    <property type="match status" value="1"/>
</dbReference>
<dbReference type="HAMAP" id="MF_01333_B">
    <property type="entry name" value="Ribosomal_uL5_B"/>
    <property type="match status" value="1"/>
</dbReference>
<dbReference type="InterPro" id="IPR002132">
    <property type="entry name" value="Ribosomal_uL5"/>
</dbReference>
<dbReference type="InterPro" id="IPR020930">
    <property type="entry name" value="Ribosomal_uL5_bac-type"/>
</dbReference>
<dbReference type="InterPro" id="IPR031309">
    <property type="entry name" value="Ribosomal_uL5_C"/>
</dbReference>
<dbReference type="InterPro" id="IPR020929">
    <property type="entry name" value="Ribosomal_uL5_CS"/>
</dbReference>
<dbReference type="InterPro" id="IPR022803">
    <property type="entry name" value="Ribosomal_uL5_dom_sf"/>
</dbReference>
<dbReference type="InterPro" id="IPR031310">
    <property type="entry name" value="Ribosomal_uL5_N"/>
</dbReference>
<dbReference type="NCBIfam" id="NF000585">
    <property type="entry name" value="PRK00010.1"/>
    <property type="match status" value="1"/>
</dbReference>
<dbReference type="PANTHER" id="PTHR11994">
    <property type="entry name" value="60S RIBOSOMAL PROTEIN L11-RELATED"/>
    <property type="match status" value="1"/>
</dbReference>
<dbReference type="Pfam" id="PF00281">
    <property type="entry name" value="Ribosomal_L5"/>
    <property type="match status" value="1"/>
</dbReference>
<dbReference type="Pfam" id="PF00673">
    <property type="entry name" value="Ribosomal_L5_C"/>
    <property type="match status" value="1"/>
</dbReference>
<dbReference type="PIRSF" id="PIRSF002161">
    <property type="entry name" value="Ribosomal_L5"/>
    <property type="match status" value="1"/>
</dbReference>
<dbReference type="SUPFAM" id="SSF55282">
    <property type="entry name" value="RL5-like"/>
    <property type="match status" value="1"/>
</dbReference>
<dbReference type="PROSITE" id="PS00358">
    <property type="entry name" value="RIBOSOMAL_L5"/>
    <property type="match status" value="1"/>
</dbReference>
<organism>
    <name type="scientific">Anaeromyxobacter dehalogenans (strain 2CP-C)</name>
    <dbReference type="NCBI Taxonomy" id="290397"/>
    <lineage>
        <taxon>Bacteria</taxon>
        <taxon>Pseudomonadati</taxon>
        <taxon>Myxococcota</taxon>
        <taxon>Myxococcia</taxon>
        <taxon>Myxococcales</taxon>
        <taxon>Cystobacterineae</taxon>
        <taxon>Anaeromyxobacteraceae</taxon>
        <taxon>Anaeromyxobacter</taxon>
    </lineage>
</organism>
<comment type="function">
    <text evidence="1">This is one of the proteins that bind and probably mediate the attachment of the 5S RNA into the large ribosomal subunit, where it forms part of the central protuberance. In the 70S ribosome it contacts protein S13 of the 30S subunit (bridge B1b), connecting the 2 subunits; this bridge is implicated in subunit movement. Contacts the P site tRNA; the 5S rRNA and some of its associated proteins might help stabilize positioning of ribosome-bound tRNAs.</text>
</comment>
<comment type="subunit">
    <text evidence="1">Part of the 50S ribosomal subunit; part of the 5S rRNA/L5/L18/L25 subcomplex. Contacts the 5S rRNA and the P site tRNA. Forms a bridge to the 30S subunit in the 70S ribosome.</text>
</comment>
<comment type="similarity">
    <text evidence="1">Belongs to the universal ribosomal protein uL5 family.</text>
</comment>
<proteinExistence type="inferred from homology"/>
<gene>
    <name evidence="1" type="primary">rplE</name>
    <name type="ordered locus">Adeh_1934</name>
</gene>
<protein>
    <recommendedName>
        <fullName evidence="1">Large ribosomal subunit protein uL5</fullName>
    </recommendedName>
    <alternativeName>
        <fullName evidence="2">50S ribosomal protein L5</fullName>
    </alternativeName>
</protein>
<accession>Q2IJ79</accession>
<name>RL5_ANADE</name>
<feature type="chain" id="PRO_0000242960" description="Large ribosomal subunit protein uL5">
    <location>
        <begin position="1"/>
        <end position="180"/>
    </location>
</feature>